<accession>A9MJB6</accession>
<comment type="function">
    <text evidence="1">Catalyzes the thiamine diphosphate-dependent decarboxylation of 2-oxoglutarate and the subsequent addition of the resulting succinic semialdehyde-thiamine pyrophosphate anion to isochorismate to yield 2-succinyl-5-enolpyruvyl-6-hydroxy-3-cyclohexene-1-carboxylate (SEPHCHC).</text>
</comment>
<comment type="catalytic activity">
    <reaction evidence="1">
        <text>isochorismate + 2-oxoglutarate + H(+) = 5-enolpyruvoyl-6-hydroxy-2-succinyl-cyclohex-3-ene-1-carboxylate + CO2</text>
        <dbReference type="Rhea" id="RHEA:25593"/>
        <dbReference type="ChEBI" id="CHEBI:15378"/>
        <dbReference type="ChEBI" id="CHEBI:16526"/>
        <dbReference type="ChEBI" id="CHEBI:16810"/>
        <dbReference type="ChEBI" id="CHEBI:29780"/>
        <dbReference type="ChEBI" id="CHEBI:58818"/>
        <dbReference type="EC" id="2.2.1.9"/>
    </reaction>
</comment>
<comment type="cofactor">
    <cofactor evidence="1">
        <name>Mg(2+)</name>
        <dbReference type="ChEBI" id="CHEBI:18420"/>
    </cofactor>
    <cofactor evidence="1">
        <name>Mn(2+)</name>
        <dbReference type="ChEBI" id="CHEBI:29035"/>
    </cofactor>
</comment>
<comment type="cofactor">
    <cofactor evidence="1">
        <name>thiamine diphosphate</name>
        <dbReference type="ChEBI" id="CHEBI:58937"/>
    </cofactor>
    <text evidence="1">Binds 1 thiamine pyrophosphate per subunit.</text>
</comment>
<comment type="pathway">
    <text evidence="1">Quinol/quinone metabolism; 1,4-dihydroxy-2-naphthoate biosynthesis; 1,4-dihydroxy-2-naphthoate from chorismate: step 2/7.</text>
</comment>
<comment type="pathway">
    <text evidence="1">Quinol/quinone metabolism; menaquinone biosynthesis.</text>
</comment>
<comment type="subunit">
    <text evidence="1">Homodimer.</text>
</comment>
<comment type="similarity">
    <text evidence="1">Belongs to the TPP enzyme family. MenD subfamily.</text>
</comment>
<gene>
    <name evidence="1" type="primary">menD</name>
    <name type="ordered locus">SARI_00590</name>
</gene>
<protein>
    <recommendedName>
        <fullName evidence="1">2-succinyl-5-enolpyruvyl-6-hydroxy-3-cyclohexene-1-carboxylate synthase</fullName>
        <shortName evidence="1">SEPHCHC synthase</shortName>
        <ecNumber evidence="1">2.2.1.9</ecNumber>
    </recommendedName>
    <alternativeName>
        <fullName evidence="1">Menaquinone biosynthesis protein MenD</fullName>
    </alternativeName>
</protein>
<proteinExistence type="inferred from homology"/>
<dbReference type="EC" id="2.2.1.9" evidence="1"/>
<dbReference type="EMBL" id="CP000880">
    <property type="protein sequence ID" value="ABX20516.1"/>
    <property type="molecule type" value="Genomic_DNA"/>
</dbReference>
<dbReference type="SMR" id="A9MJB6"/>
<dbReference type="STRING" id="41514.SARI_00590"/>
<dbReference type="KEGG" id="ses:SARI_00590"/>
<dbReference type="HOGENOM" id="CLU_006051_3_0_6"/>
<dbReference type="UniPathway" id="UPA00079"/>
<dbReference type="UniPathway" id="UPA01057">
    <property type="reaction ID" value="UER00164"/>
</dbReference>
<dbReference type="Proteomes" id="UP000002084">
    <property type="component" value="Chromosome"/>
</dbReference>
<dbReference type="GO" id="GO:0070204">
    <property type="term" value="F:2-succinyl-5-enolpyruvyl-6-hydroxy-3-cyclohexene-1-carboxylic-acid synthase activity"/>
    <property type="evidence" value="ECO:0007669"/>
    <property type="project" value="UniProtKB-UniRule"/>
</dbReference>
<dbReference type="GO" id="GO:0000287">
    <property type="term" value="F:magnesium ion binding"/>
    <property type="evidence" value="ECO:0007669"/>
    <property type="project" value="UniProtKB-UniRule"/>
</dbReference>
<dbReference type="GO" id="GO:0030145">
    <property type="term" value="F:manganese ion binding"/>
    <property type="evidence" value="ECO:0007669"/>
    <property type="project" value="UniProtKB-UniRule"/>
</dbReference>
<dbReference type="GO" id="GO:0030976">
    <property type="term" value="F:thiamine pyrophosphate binding"/>
    <property type="evidence" value="ECO:0007669"/>
    <property type="project" value="UniProtKB-UniRule"/>
</dbReference>
<dbReference type="GO" id="GO:0009234">
    <property type="term" value="P:menaquinone biosynthetic process"/>
    <property type="evidence" value="ECO:0007669"/>
    <property type="project" value="UniProtKB-UniRule"/>
</dbReference>
<dbReference type="CDD" id="cd07037">
    <property type="entry name" value="TPP_PYR_MenD"/>
    <property type="match status" value="1"/>
</dbReference>
<dbReference type="CDD" id="cd02009">
    <property type="entry name" value="TPP_SHCHC_synthase"/>
    <property type="match status" value="1"/>
</dbReference>
<dbReference type="FunFam" id="3.40.50.1220:FF:000010">
    <property type="entry name" value="2-succinyl-5-enolpyruvyl-6-hydroxy-3-cyclohexene-1-carboxylate synthase"/>
    <property type="match status" value="1"/>
</dbReference>
<dbReference type="FunFam" id="3.40.50.970:FF:000029">
    <property type="entry name" value="2-succinyl-5-enolpyruvyl-6-hydroxy-3-cyclohexene-1-carboxylate synthase"/>
    <property type="match status" value="1"/>
</dbReference>
<dbReference type="Gene3D" id="3.40.50.970">
    <property type="match status" value="2"/>
</dbReference>
<dbReference type="Gene3D" id="3.40.50.1220">
    <property type="entry name" value="TPP-binding domain"/>
    <property type="match status" value="1"/>
</dbReference>
<dbReference type="HAMAP" id="MF_01659">
    <property type="entry name" value="MenD"/>
    <property type="match status" value="1"/>
</dbReference>
<dbReference type="InterPro" id="IPR004433">
    <property type="entry name" value="MenaQ_synth_MenD"/>
</dbReference>
<dbReference type="InterPro" id="IPR032264">
    <property type="entry name" value="MenD_middle"/>
</dbReference>
<dbReference type="InterPro" id="IPR029061">
    <property type="entry name" value="THDP-binding"/>
</dbReference>
<dbReference type="InterPro" id="IPR012001">
    <property type="entry name" value="Thiamin_PyroP_enz_TPP-bd_dom"/>
</dbReference>
<dbReference type="InterPro" id="IPR011766">
    <property type="entry name" value="TPP_enzyme_TPP-bd"/>
</dbReference>
<dbReference type="NCBIfam" id="TIGR00173">
    <property type="entry name" value="menD"/>
    <property type="match status" value="1"/>
</dbReference>
<dbReference type="PANTHER" id="PTHR42916">
    <property type="entry name" value="2-SUCCINYL-5-ENOLPYRUVYL-6-HYDROXY-3-CYCLOHEXENE-1-CARBOXYLATE SYNTHASE"/>
    <property type="match status" value="1"/>
</dbReference>
<dbReference type="PANTHER" id="PTHR42916:SF1">
    <property type="entry name" value="PROTEIN PHYLLO, CHLOROPLASTIC"/>
    <property type="match status" value="1"/>
</dbReference>
<dbReference type="Pfam" id="PF02775">
    <property type="entry name" value="TPP_enzyme_C"/>
    <property type="match status" value="1"/>
</dbReference>
<dbReference type="Pfam" id="PF16582">
    <property type="entry name" value="TPP_enzyme_M_2"/>
    <property type="match status" value="1"/>
</dbReference>
<dbReference type="Pfam" id="PF02776">
    <property type="entry name" value="TPP_enzyme_N"/>
    <property type="match status" value="1"/>
</dbReference>
<dbReference type="PIRSF" id="PIRSF004983">
    <property type="entry name" value="MenD"/>
    <property type="match status" value="1"/>
</dbReference>
<dbReference type="SUPFAM" id="SSF52518">
    <property type="entry name" value="Thiamin diphosphate-binding fold (THDP-binding)"/>
    <property type="match status" value="2"/>
</dbReference>
<keyword id="KW-0460">Magnesium</keyword>
<keyword id="KW-0464">Manganese</keyword>
<keyword id="KW-0474">Menaquinone biosynthesis</keyword>
<keyword id="KW-0479">Metal-binding</keyword>
<keyword id="KW-1185">Reference proteome</keyword>
<keyword id="KW-0786">Thiamine pyrophosphate</keyword>
<keyword id="KW-0808">Transferase</keyword>
<organism>
    <name type="scientific">Salmonella arizonae (strain ATCC BAA-731 / CDC346-86 / RSK2980)</name>
    <dbReference type="NCBI Taxonomy" id="41514"/>
    <lineage>
        <taxon>Bacteria</taxon>
        <taxon>Pseudomonadati</taxon>
        <taxon>Pseudomonadota</taxon>
        <taxon>Gammaproteobacteria</taxon>
        <taxon>Enterobacterales</taxon>
        <taxon>Enterobacteriaceae</taxon>
        <taxon>Salmonella</taxon>
    </lineage>
</organism>
<name>MEND_SALAR</name>
<evidence type="ECO:0000255" key="1">
    <source>
        <dbReference type="HAMAP-Rule" id="MF_01659"/>
    </source>
</evidence>
<feature type="chain" id="PRO_0000341820" description="2-succinyl-5-enolpyruvyl-6-hydroxy-3-cyclohexene-1-carboxylate synthase">
    <location>
        <begin position="1"/>
        <end position="556"/>
    </location>
</feature>
<sequence>MSVSAFNRRWAAVILEALTRHGVRHVCIAPGSRSTPLTLAAAENPAFIHHTHFDERGLGHLALGLAKASKQPVAVIVTSGTAVANLYPALIEAGLTGEKLILLTADRPPELIDCGANQAIRQAGIFASHPSQTLSLPRPTQDIPARWLVSTIDNALAMLHAGALHINCPFAEPLYGDMNDTGLVWQQRLGDWWQDEKPWLREARRRESDKQRDWFFWRQKRGVVVAGRMSAEEGKKVAQWAQTLGWPLIGDVLSQTGQPLPCADLWLGNAKAVTELQQAQIVVQLGSSLTGKRLLQWQATCEPEEYWVIDNIEGRLDPAHHRGRRLVAKIADWLELHPAEKRKPWCVEIPRLAELAWQRVVAQRDTFGEAQLAHRIRDYLPEQGQLFVGNSLVVRLIDALSQLPAGYPVYSNRGASGIDGLLSTAAGVQRASAKSTLAIVGDLSALYDLNALALLRQVSAPFVLIVVNNNGGQIFSLLPTPQSKRERFYLMPQNVHFDHAAAMFNLRYHRPENWEELELALASAWRTPATTLIELVVNETDGAQTLQQLLAQVSHL</sequence>
<reference key="1">
    <citation type="submission" date="2007-11" db="EMBL/GenBank/DDBJ databases">
        <authorList>
            <consortium name="The Salmonella enterica serovar Arizonae Genome Sequencing Project"/>
            <person name="McClelland M."/>
            <person name="Sanderson E.K."/>
            <person name="Porwollik S."/>
            <person name="Spieth J."/>
            <person name="Clifton W.S."/>
            <person name="Fulton R."/>
            <person name="Chunyan W."/>
            <person name="Wollam A."/>
            <person name="Shah N."/>
            <person name="Pepin K."/>
            <person name="Bhonagiri V."/>
            <person name="Nash W."/>
            <person name="Johnson M."/>
            <person name="Thiruvilangam P."/>
            <person name="Wilson R."/>
        </authorList>
    </citation>
    <scope>NUCLEOTIDE SEQUENCE [LARGE SCALE GENOMIC DNA]</scope>
    <source>
        <strain>ATCC BAA-731 / CDC346-86 / RSK2980</strain>
    </source>
</reference>